<name>ERA_MYCSK</name>
<evidence type="ECO:0000255" key="1">
    <source>
        <dbReference type="HAMAP-Rule" id="MF_00367"/>
    </source>
</evidence>
<evidence type="ECO:0000255" key="2">
    <source>
        <dbReference type="PROSITE-ProRule" id="PRU01050"/>
    </source>
</evidence>
<dbReference type="EMBL" id="CP000518">
    <property type="protein sequence ID" value="ABL92709.1"/>
    <property type="molecule type" value="Genomic_DNA"/>
</dbReference>
<dbReference type="SMR" id="A1UIQ1"/>
<dbReference type="STRING" id="189918.Mkms_3515"/>
<dbReference type="KEGG" id="mkm:Mkms_3515"/>
<dbReference type="HOGENOM" id="CLU_038009_0_2_11"/>
<dbReference type="OrthoDB" id="9805918at2"/>
<dbReference type="GO" id="GO:0030313">
    <property type="term" value="C:cell envelope"/>
    <property type="evidence" value="ECO:0007669"/>
    <property type="project" value="UniProtKB-SubCell"/>
</dbReference>
<dbReference type="GO" id="GO:0005829">
    <property type="term" value="C:cytosol"/>
    <property type="evidence" value="ECO:0007669"/>
    <property type="project" value="TreeGrafter"/>
</dbReference>
<dbReference type="GO" id="GO:0005576">
    <property type="term" value="C:extracellular region"/>
    <property type="evidence" value="ECO:0007669"/>
    <property type="project" value="UniProtKB-KW"/>
</dbReference>
<dbReference type="GO" id="GO:0005525">
    <property type="term" value="F:GTP binding"/>
    <property type="evidence" value="ECO:0007669"/>
    <property type="project" value="UniProtKB-UniRule"/>
</dbReference>
<dbReference type="GO" id="GO:0003924">
    <property type="term" value="F:GTPase activity"/>
    <property type="evidence" value="ECO:0007669"/>
    <property type="project" value="UniProtKB-UniRule"/>
</dbReference>
<dbReference type="GO" id="GO:0043024">
    <property type="term" value="F:ribosomal small subunit binding"/>
    <property type="evidence" value="ECO:0007669"/>
    <property type="project" value="TreeGrafter"/>
</dbReference>
<dbReference type="GO" id="GO:0019843">
    <property type="term" value="F:rRNA binding"/>
    <property type="evidence" value="ECO:0007669"/>
    <property type="project" value="TreeGrafter"/>
</dbReference>
<dbReference type="GO" id="GO:0000028">
    <property type="term" value="P:ribosomal small subunit assembly"/>
    <property type="evidence" value="ECO:0007669"/>
    <property type="project" value="TreeGrafter"/>
</dbReference>
<dbReference type="CDD" id="cd04163">
    <property type="entry name" value="Era"/>
    <property type="match status" value="1"/>
</dbReference>
<dbReference type="CDD" id="cd22534">
    <property type="entry name" value="KH-II_Era"/>
    <property type="match status" value="1"/>
</dbReference>
<dbReference type="FunFam" id="3.30.300.20:FF:000003">
    <property type="entry name" value="GTPase Era"/>
    <property type="match status" value="1"/>
</dbReference>
<dbReference type="FunFam" id="3.40.50.300:FF:000094">
    <property type="entry name" value="GTPase Era"/>
    <property type="match status" value="1"/>
</dbReference>
<dbReference type="Gene3D" id="3.30.300.20">
    <property type="match status" value="1"/>
</dbReference>
<dbReference type="Gene3D" id="3.40.50.300">
    <property type="entry name" value="P-loop containing nucleotide triphosphate hydrolases"/>
    <property type="match status" value="1"/>
</dbReference>
<dbReference type="HAMAP" id="MF_00367">
    <property type="entry name" value="GTPase_Era"/>
    <property type="match status" value="1"/>
</dbReference>
<dbReference type="InterPro" id="IPR030388">
    <property type="entry name" value="G_ERA_dom"/>
</dbReference>
<dbReference type="InterPro" id="IPR006073">
    <property type="entry name" value="GTP-bd"/>
</dbReference>
<dbReference type="InterPro" id="IPR005662">
    <property type="entry name" value="GTPase_Era-like"/>
</dbReference>
<dbReference type="InterPro" id="IPR015946">
    <property type="entry name" value="KH_dom-like_a/b"/>
</dbReference>
<dbReference type="InterPro" id="IPR004044">
    <property type="entry name" value="KH_dom_type_2"/>
</dbReference>
<dbReference type="InterPro" id="IPR009019">
    <property type="entry name" value="KH_sf_prok-type"/>
</dbReference>
<dbReference type="InterPro" id="IPR027417">
    <property type="entry name" value="P-loop_NTPase"/>
</dbReference>
<dbReference type="InterPro" id="IPR005225">
    <property type="entry name" value="Small_GTP-bd"/>
</dbReference>
<dbReference type="NCBIfam" id="TIGR00436">
    <property type="entry name" value="era"/>
    <property type="match status" value="1"/>
</dbReference>
<dbReference type="NCBIfam" id="NF000908">
    <property type="entry name" value="PRK00089.1"/>
    <property type="match status" value="1"/>
</dbReference>
<dbReference type="NCBIfam" id="TIGR00231">
    <property type="entry name" value="small_GTP"/>
    <property type="match status" value="1"/>
</dbReference>
<dbReference type="PANTHER" id="PTHR42698">
    <property type="entry name" value="GTPASE ERA"/>
    <property type="match status" value="1"/>
</dbReference>
<dbReference type="PANTHER" id="PTHR42698:SF1">
    <property type="entry name" value="GTPASE ERA, MITOCHONDRIAL"/>
    <property type="match status" value="1"/>
</dbReference>
<dbReference type="Pfam" id="PF07650">
    <property type="entry name" value="KH_2"/>
    <property type="match status" value="1"/>
</dbReference>
<dbReference type="Pfam" id="PF01926">
    <property type="entry name" value="MMR_HSR1"/>
    <property type="match status" value="1"/>
</dbReference>
<dbReference type="PRINTS" id="PR00326">
    <property type="entry name" value="GTP1OBG"/>
</dbReference>
<dbReference type="SUPFAM" id="SSF52540">
    <property type="entry name" value="P-loop containing nucleoside triphosphate hydrolases"/>
    <property type="match status" value="1"/>
</dbReference>
<dbReference type="SUPFAM" id="SSF54814">
    <property type="entry name" value="Prokaryotic type KH domain (KH-domain type II)"/>
    <property type="match status" value="1"/>
</dbReference>
<dbReference type="PROSITE" id="PS51713">
    <property type="entry name" value="G_ERA"/>
    <property type="match status" value="1"/>
</dbReference>
<dbReference type="PROSITE" id="PS50823">
    <property type="entry name" value="KH_TYPE_2"/>
    <property type="match status" value="1"/>
</dbReference>
<comment type="function">
    <text evidence="1">Exhibits GTPase activity. Binds RNA but is probably not involved in ribosome assembly in mycobacteria.</text>
</comment>
<comment type="subunit">
    <text evidence="1">Monomer.</text>
</comment>
<comment type="subcellular location">
    <subcellularLocation>
        <location evidence="1">Cell envelope</location>
    </subcellularLocation>
    <subcellularLocation>
        <location evidence="1">Secreted</location>
        <location evidence="1">Cell wall</location>
    </subcellularLocation>
</comment>
<comment type="similarity">
    <text evidence="1">Belongs to the TRAFAC class TrmE-Era-EngA-EngB-Septin-like GTPase superfamily. Era GTPase family.</text>
</comment>
<feature type="chain" id="PRO_1000079713" description="GTPase Era">
    <location>
        <begin position="1"/>
        <end position="299"/>
    </location>
</feature>
<feature type="domain" description="Era-type G" evidence="2">
    <location>
        <begin position="5"/>
        <end position="175"/>
    </location>
</feature>
<feature type="domain" description="KH type-2" evidence="1">
    <location>
        <begin position="206"/>
        <end position="285"/>
    </location>
</feature>
<feature type="region of interest" description="G1" evidence="2">
    <location>
        <begin position="13"/>
        <end position="20"/>
    </location>
</feature>
<feature type="region of interest" description="G2" evidence="2">
    <location>
        <begin position="39"/>
        <end position="43"/>
    </location>
</feature>
<feature type="region of interest" description="G3" evidence="2">
    <location>
        <begin position="60"/>
        <end position="63"/>
    </location>
</feature>
<feature type="region of interest" description="G4" evidence="2">
    <location>
        <begin position="124"/>
        <end position="127"/>
    </location>
</feature>
<feature type="region of interest" description="G5" evidence="2">
    <location>
        <begin position="154"/>
        <end position="156"/>
    </location>
</feature>
<feature type="binding site" evidence="1">
    <location>
        <begin position="13"/>
        <end position="20"/>
    </location>
    <ligand>
        <name>GTP</name>
        <dbReference type="ChEBI" id="CHEBI:37565"/>
    </ligand>
</feature>
<feature type="binding site" evidence="1">
    <location>
        <begin position="60"/>
        <end position="64"/>
    </location>
    <ligand>
        <name>GTP</name>
        <dbReference type="ChEBI" id="CHEBI:37565"/>
    </ligand>
</feature>
<feature type="binding site" evidence="1">
    <location>
        <begin position="124"/>
        <end position="127"/>
    </location>
    <ligand>
        <name>GTP</name>
        <dbReference type="ChEBI" id="CHEBI:37565"/>
    </ligand>
</feature>
<sequence>MSEFRSGFVCFVGRPNTGKSTLTNALVGTKVAITSNRPQTTRHTIRGIVHRDEFQIILVDTPGLHRPRTLLGQRLNDLVKTTYSEVDVIGLCIPADEAIGPGDRWIHEQIRAVAPRTTLVVIVTKIDKVPRDRVAAQLMAVSELVGPDAEIVPVSATTGEQLDVLTDVLAGKLPPGPAFYPDGELTDEPEETLMAELIREAALEGVRDELPHSLAVVIDEVSPREDRDDLIDVHAILYVERDSQKGIVIGKGGARLREVGTAARLQIEKLLGTKVYLDLRVKIAKNWQRDPKQLGRLGF</sequence>
<keyword id="KW-0134">Cell wall</keyword>
<keyword id="KW-0342">GTP-binding</keyword>
<keyword id="KW-0547">Nucleotide-binding</keyword>
<keyword id="KW-0694">RNA-binding</keyword>
<keyword id="KW-0964">Secreted</keyword>
<protein>
    <recommendedName>
        <fullName evidence="1">GTPase Era</fullName>
    </recommendedName>
</protein>
<gene>
    <name evidence="1" type="primary">era</name>
    <name type="ordered locus">Mkms_3515</name>
</gene>
<proteinExistence type="inferred from homology"/>
<reference key="1">
    <citation type="submission" date="2006-12" db="EMBL/GenBank/DDBJ databases">
        <title>Complete sequence of chromosome of Mycobacterium sp. KMS.</title>
        <authorList>
            <consortium name="US DOE Joint Genome Institute"/>
            <person name="Copeland A."/>
            <person name="Lucas S."/>
            <person name="Lapidus A."/>
            <person name="Barry K."/>
            <person name="Detter J.C."/>
            <person name="Glavina del Rio T."/>
            <person name="Hammon N."/>
            <person name="Israni S."/>
            <person name="Dalin E."/>
            <person name="Tice H."/>
            <person name="Pitluck S."/>
            <person name="Kiss H."/>
            <person name="Brettin T."/>
            <person name="Bruce D."/>
            <person name="Han C."/>
            <person name="Tapia R."/>
            <person name="Gilna P."/>
            <person name="Schmutz J."/>
            <person name="Larimer F."/>
            <person name="Land M."/>
            <person name="Hauser L."/>
            <person name="Kyrpides N."/>
            <person name="Mikhailova N."/>
            <person name="Miller C.D."/>
            <person name="Richardson P."/>
        </authorList>
    </citation>
    <scope>NUCLEOTIDE SEQUENCE [LARGE SCALE GENOMIC DNA]</scope>
    <source>
        <strain>KMS</strain>
    </source>
</reference>
<accession>A1UIQ1</accession>
<organism>
    <name type="scientific">Mycobacterium sp. (strain KMS)</name>
    <dbReference type="NCBI Taxonomy" id="189918"/>
    <lineage>
        <taxon>Bacteria</taxon>
        <taxon>Bacillati</taxon>
        <taxon>Actinomycetota</taxon>
        <taxon>Actinomycetes</taxon>
        <taxon>Mycobacteriales</taxon>
        <taxon>Mycobacteriaceae</taxon>
        <taxon>Mycobacterium</taxon>
    </lineage>
</organism>